<dbReference type="EC" id="5.4.99.62" evidence="1"/>
<dbReference type="EMBL" id="CP000653">
    <property type="protein sequence ID" value="ABP62769.1"/>
    <property type="molecule type" value="Genomic_DNA"/>
</dbReference>
<dbReference type="RefSeq" id="WP_015961073.1">
    <property type="nucleotide sequence ID" value="NC_009436.1"/>
</dbReference>
<dbReference type="SMR" id="A4WGD9"/>
<dbReference type="STRING" id="399742.Ent638_4116"/>
<dbReference type="KEGG" id="ent:Ent638_4116"/>
<dbReference type="eggNOG" id="COG1869">
    <property type="taxonomic scope" value="Bacteria"/>
</dbReference>
<dbReference type="HOGENOM" id="CLU_135498_0_0_6"/>
<dbReference type="OrthoDB" id="9805009at2"/>
<dbReference type="UniPathway" id="UPA00916">
    <property type="reaction ID" value="UER00888"/>
</dbReference>
<dbReference type="Proteomes" id="UP000000230">
    <property type="component" value="Chromosome"/>
</dbReference>
<dbReference type="GO" id="GO:0005829">
    <property type="term" value="C:cytosol"/>
    <property type="evidence" value="ECO:0007669"/>
    <property type="project" value="TreeGrafter"/>
</dbReference>
<dbReference type="GO" id="GO:0062193">
    <property type="term" value="F:D-ribose pyranase activity"/>
    <property type="evidence" value="ECO:0007669"/>
    <property type="project" value="UniProtKB-EC"/>
</dbReference>
<dbReference type="GO" id="GO:0016872">
    <property type="term" value="F:intramolecular lyase activity"/>
    <property type="evidence" value="ECO:0007669"/>
    <property type="project" value="UniProtKB-UniRule"/>
</dbReference>
<dbReference type="GO" id="GO:0048029">
    <property type="term" value="F:monosaccharide binding"/>
    <property type="evidence" value="ECO:0007669"/>
    <property type="project" value="InterPro"/>
</dbReference>
<dbReference type="GO" id="GO:0019303">
    <property type="term" value="P:D-ribose catabolic process"/>
    <property type="evidence" value="ECO:0007669"/>
    <property type="project" value="UniProtKB-UniRule"/>
</dbReference>
<dbReference type="FunFam" id="3.40.1650.10:FF:000002">
    <property type="entry name" value="D-ribose pyranase"/>
    <property type="match status" value="1"/>
</dbReference>
<dbReference type="Gene3D" id="3.40.1650.10">
    <property type="entry name" value="RbsD-like domain"/>
    <property type="match status" value="1"/>
</dbReference>
<dbReference type="HAMAP" id="MF_01661">
    <property type="entry name" value="D_rib_pyranase"/>
    <property type="match status" value="1"/>
</dbReference>
<dbReference type="InterPro" id="IPR023064">
    <property type="entry name" value="D-ribose_pyranase"/>
</dbReference>
<dbReference type="InterPro" id="IPR023750">
    <property type="entry name" value="RbsD-like_sf"/>
</dbReference>
<dbReference type="InterPro" id="IPR007721">
    <property type="entry name" value="RbsD_FucU"/>
</dbReference>
<dbReference type="NCBIfam" id="NF008761">
    <property type="entry name" value="PRK11797.1"/>
    <property type="match status" value="1"/>
</dbReference>
<dbReference type="PANTHER" id="PTHR37831">
    <property type="entry name" value="D-RIBOSE PYRANASE"/>
    <property type="match status" value="1"/>
</dbReference>
<dbReference type="PANTHER" id="PTHR37831:SF1">
    <property type="entry name" value="D-RIBOSE PYRANASE"/>
    <property type="match status" value="1"/>
</dbReference>
<dbReference type="Pfam" id="PF05025">
    <property type="entry name" value="RbsD_FucU"/>
    <property type="match status" value="1"/>
</dbReference>
<dbReference type="SUPFAM" id="SSF102546">
    <property type="entry name" value="RbsD-like"/>
    <property type="match status" value="1"/>
</dbReference>
<keyword id="KW-0119">Carbohydrate metabolism</keyword>
<keyword id="KW-0963">Cytoplasm</keyword>
<keyword id="KW-0413">Isomerase</keyword>
<proteinExistence type="inferred from homology"/>
<protein>
    <recommendedName>
        <fullName evidence="1">D-ribose pyranase</fullName>
        <ecNumber evidence="1">5.4.99.62</ecNumber>
    </recommendedName>
</protein>
<name>RBSD_ENT38</name>
<feature type="chain" id="PRO_0000346193" description="D-ribose pyranase">
    <location>
        <begin position="1"/>
        <end position="139"/>
    </location>
</feature>
<feature type="active site" description="Proton donor" evidence="1">
    <location>
        <position position="20"/>
    </location>
</feature>
<feature type="binding site" evidence="1">
    <location>
        <position position="28"/>
    </location>
    <ligand>
        <name>substrate</name>
    </ligand>
</feature>
<feature type="binding site" evidence="1">
    <location>
        <position position="106"/>
    </location>
    <ligand>
        <name>substrate</name>
    </ligand>
</feature>
<feature type="binding site" evidence="1">
    <location>
        <begin position="128"/>
        <end position="130"/>
    </location>
    <ligand>
        <name>substrate</name>
    </ligand>
</feature>
<comment type="function">
    <text evidence="1">Catalyzes the interconversion of beta-pyran and beta-furan forms of D-ribose.</text>
</comment>
<comment type="catalytic activity">
    <reaction evidence="1">
        <text>beta-D-ribopyranose = beta-D-ribofuranose</text>
        <dbReference type="Rhea" id="RHEA:25432"/>
        <dbReference type="ChEBI" id="CHEBI:27476"/>
        <dbReference type="ChEBI" id="CHEBI:47002"/>
        <dbReference type="EC" id="5.4.99.62"/>
    </reaction>
</comment>
<comment type="pathway">
    <text evidence="1">Carbohydrate metabolism; D-ribose degradation; D-ribose 5-phosphate from beta-D-ribopyranose: step 1/2.</text>
</comment>
<comment type="subunit">
    <text evidence="1">Homodecamer.</text>
</comment>
<comment type="subcellular location">
    <subcellularLocation>
        <location evidence="1">Cytoplasm</location>
    </subcellularLocation>
</comment>
<comment type="similarity">
    <text evidence="1">Belongs to the RbsD / FucU family. RbsD subfamily.</text>
</comment>
<sequence>MKKGTVLNSEISSVISRLGHTDTLVVCDAGLPVPHSTTRIDMALTQGVPSFMQVLDVVTAEMQVETAILATEIKQHNPQLHETLLGHIEQLQQHQGNTIEIRYTTHEQFKQQTADSQAVIRSGECSPYANIILCAGVTF</sequence>
<gene>
    <name evidence="1" type="primary">rbsD</name>
    <name type="ordered locus">Ent638_4116</name>
</gene>
<accession>A4WGD9</accession>
<organism>
    <name type="scientific">Enterobacter sp. (strain 638)</name>
    <dbReference type="NCBI Taxonomy" id="399742"/>
    <lineage>
        <taxon>Bacteria</taxon>
        <taxon>Pseudomonadati</taxon>
        <taxon>Pseudomonadota</taxon>
        <taxon>Gammaproteobacteria</taxon>
        <taxon>Enterobacterales</taxon>
        <taxon>Enterobacteriaceae</taxon>
        <taxon>Enterobacter</taxon>
    </lineage>
</organism>
<evidence type="ECO:0000255" key="1">
    <source>
        <dbReference type="HAMAP-Rule" id="MF_01661"/>
    </source>
</evidence>
<reference key="1">
    <citation type="journal article" date="2010" name="PLoS Genet.">
        <title>Genome sequence of the plant growth promoting endophytic bacterium Enterobacter sp. 638.</title>
        <authorList>
            <person name="Taghavi S."/>
            <person name="van der Lelie D."/>
            <person name="Hoffman A."/>
            <person name="Zhang Y.B."/>
            <person name="Walla M.D."/>
            <person name="Vangronsveld J."/>
            <person name="Newman L."/>
            <person name="Monchy S."/>
        </authorList>
    </citation>
    <scope>NUCLEOTIDE SEQUENCE [LARGE SCALE GENOMIC DNA]</scope>
    <source>
        <strain>638</strain>
    </source>
</reference>